<name>IRRE_DEIRA</name>
<dbReference type="EC" id="3.4.24.-" evidence="1"/>
<dbReference type="EMBL" id="AE000513">
    <property type="protein sequence ID" value="AAF09762.1"/>
    <property type="molecule type" value="Genomic_DNA"/>
</dbReference>
<dbReference type="PIR" id="G75551">
    <property type="entry name" value="G75551"/>
</dbReference>
<dbReference type="RefSeq" id="NP_293891.1">
    <property type="nucleotide sequence ID" value="NC_001263.1"/>
</dbReference>
<dbReference type="RefSeq" id="WP_010886813.1">
    <property type="nucleotide sequence ID" value="NC_001263.1"/>
</dbReference>
<dbReference type="SMR" id="Q9RXY7"/>
<dbReference type="STRING" id="243230.DR_0167"/>
<dbReference type="PaxDb" id="243230-DR_0167"/>
<dbReference type="EnsemblBacteria" id="AAF09762">
    <property type="protein sequence ID" value="AAF09762"/>
    <property type="gene ID" value="DR_0167"/>
</dbReference>
<dbReference type="GeneID" id="69516398"/>
<dbReference type="KEGG" id="dra:DR_0167"/>
<dbReference type="PATRIC" id="fig|243230.17.peg.332"/>
<dbReference type="eggNOG" id="COG2856">
    <property type="taxonomic scope" value="Bacteria"/>
</dbReference>
<dbReference type="HOGENOM" id="CLU_1052605_0_0_0"/>
<dbReference type="InParanoid" id="Q9RXY7"/>
<dbReference type="OrthoDB" id="9794834at2"/>
<dbReference type="Proteomes" id="UP000002524">
    <property type="component" value="Chromosome 1"/>
</dbReference>
<dbReference type="GO" id="GO:0003677">
    <property type="term" value="F:DNA binding"/>
    <property type="evidence" value="ECO:0007669"/>
    <property type="project" value="UniProtKB-KW"/>
</dbReference>
<dbReference type="GO" id="GO:0046872">
    <property type="term" value="F:metal ion binding"/>
    <property type="evidence" value="ECO:0007669"/>
    <property type="project" value="UniProtKB-KW"/>
</dbReference>
<dbReference type="GO" id="GO:0008237">
    <property type="term" value="F:metallopeptidase activity"/>
    <property type="evidence" value="ECO:0007669"/>
    <property type="project" value="UniProtKB-KW"/>
</dbReference>
<dbReference type="GO" id="GO:0006508">
    <property type="term" value="P:proteolysis"/>
    <property type="evidence" value="ECO:0007669"/>
    <property type="project" value="UniProtKB-KW"/>
</dbReference>
<dbReference type="Gene3D" id="1.10.10.2910">
    <property type="match status" value="1"/>
</dbReference>
<dbReference type="Gene3D" id="3.30.450.130">
    <property type="entry name" value="irre protein"/>
    <property type="match status" value="1"/>
</dbReference>
<dbReference type="Gene3D" id="1.10.10.1030">
    <property type="entry name" value="IrrE, HTH domain"/>
    <property type="match status" value="1"/>
</dbReference>
<dbReference type="InterPro" id="IPR044853">
    <property type="entry name" value="G3DSA:1.10.10.1030"/>
</dbReference>
<dbReference type="InterPro" id="IPR010359">
    <property type="entry name" value="IrrE_HExxH"/>
</dbReference>
<dbReference type="InterPro" id="IPR052345">
    <property type="entry name" value="Rad_response_metalloprotease"/>
</dbReference>
<dbReference type="PANTHER" id="PTHR43236">
    <property type="entry name" value="ANTITOXIN HIGA1"/>
    <property type="match status" value="1"/>
</dbReference>
<dbReference type="PANTHER" id="PTHR43236:SF2">
    <property type="entry name" value="BLL0069 PROTEIN"/>
    <property type="match status" value="1"/>
</dbReference>
<dbReference type="Pfam" id="PF06114">
    <property type="entry name" value="Peptidase_M78"/>
    <property type="match status" value="1"/>
</dbReference>
<dbReference type="PROSITE" id="PS00356">
    <property type="entry name" value="HTH_LACI_1"/>
    <property type="match status" value="1"/>
</dbReference>
<dbReference type="PROSITE" id="PS00142">
    <property type="entry name" value="ZINC_PROTEASE"/>
    <property type="match status" value="1"/>
</dbReference>
<accession>Q9RXY7</accession>
<comment type="function">
    <text evidence="1 3 4 5">Plays a central regulatory role in DNA repair and protection pathways in response to radiation stress (PubMed:12804570, PubMed:22051194). Acts as a site-specific metalloprotease that cleaves and inactivates the repressor protein DdrO, resulting in induced expression of genes required for DNA repair and cell survival after exposure to radiation (By similarity). Regulates the expression of dozens of proteins from different pathways, including the important DNA repair proteins RecA and PprA (PubMed:12399492, PubMed:12804570, PubMed:22051194). Binds to the promoters of recA and pprA (PubMed:22051194).</text>
</comment>
<comment type="domain">
    <text evidence="1">Composed of three structural domains: an N-terminal zinc-peptidase domain, a central helix-turn-helix motif, and a C-terminal GAF-type domain.</text>
</comment>
<comment type="disruption phenotype">
    <text evidence="3">Mutant is sensitive to ionizing radiation, UV light and mitomycin C.</text>
</comment>
<comment type="caution">
    <text evidence="8">It is uncertain whether Met-1 or Val-41 is the initiator.</text>
</comment>
<reference key="1">
    <citation type="journal article" date="1999" name="Science">
        <title>Genome sequence of the radioresistant bacterium Deinococcus radiodurans R1.</title>
        <authorList>
            <person name="White O."/>
            <person name="Eisen J.A."/>
            <person name="Heidelberg J.F."/>
            <person name="Hickey E.K."/>
            <person name="Peterson J.D."/>
            <person name="Dodson R.J."/>
            <person name="Haft D.H."/>
            <person name="Gwinn M.L."/>
            <person name="Nelson W.C."/>
            <person name="Richardson D.L."/>
            <person name="Moffat K.S."/>
            <person name="Qin H."/>
            <person name="Jiang L."/>
            <person name="Pamphile W."/>
            <person name="Crosby M."/>
            <person name="Shen M."/>
            <person name="Vamathevan J.J."/>
            <person name="Lam P."/>
            <person name="McDonald L.A."/>
            <person name="Utterback T.R."/>
            <person name="Zalewski C."/>
            <person name="Makarova K.S."/>
            <person name="Aravind L."/>
            <person name="Daly M.J."/>
            <person name="Minton K.W."/>
            <person name="Fleischmann R.D."/>
            <person name="Ketchum K.A."/>
            <person name="Nelson K.E."/>
            <person name="Salzberg S.L."/>
            <person name="Smith H.O."/>
            <person name="Venter J.C."/>
            <person name="Fraser C.M."/>
        </authorList>
    </citation>
    <scope>NUCLEOTIDE SEQUENCE [LARGE SCALE GENOMIC DNA]</scope>
    <source>
        <strain>ATCC 13939 / DSM 20539 / JCM 16871 / CCUG 27074 / LMG 4051 / NBRC 15346 / NCIMB 9279 / VKM B-1422 / R1</strain>
    </source>
</reference>
<reference key="2">
    <citation type="journal article" date="2002" name="J. Bacteriol.">
        <title>The IrrE protein of Deinococcus radiodurans R1 is a novel regulator of recA expression.</title>
        <authorList>
            <person name="Earl A.M."/>
            <person name="Mohundro M.M."/>
            <person name="Mian I.S."/>
            <person name="Battista J.R."/>
        </authorList>
    </citation>
    <scope>DISRUPTION PHENOTYPE</scope>
    <scope>FUNCTION</scope>
    <source>
        <strain>ATCC 13939 / DSM 20539 / JCM 16871 / CCUG 27074 / LMG 4051 / NBRC 15346 / NCIMB 9279 / VKM B-1422 / R1</strain>
    </source>
</reference>
<reference key="3">
    <citation type="journal article" date="2003" name="Biochem. Biophys. Res. Commun.">
        <title>PprI: a general switch responsible for extreme radioresistance of Deinococcus radiodurans.</title>
        <authorList>
            <person name="Hua Y."/>
            <person name="Narumi I."/>
            <person name="Gao G."/>
            <person name="Tian B."/>
            <person name="Satoh K."/>
            <person name="Kitayama S."/>
            <person name="Shen B."/>
        </authorList>
    </citation>
    <scope>FUNCTION</scope>
</reference>
<reference key="4">
    <citation type="journal article" date="2012" name="DNA Repair">
        <title>DNA binding is essential for PprI function in response to radiation damage in Deinococcus radiodurans.</title>
        <authorList>
            <person name="Lu H."/>
            <person name="Chen H."/>
            <person name="Xu G."/>
            <person name="Shah A.M."/>
            <person name="Hua Y."/>
        </authorList>
    </citation>
    <scope>FUNCTION</scope>
    <scope>DNA-BINDING</scope>
    <source>
        <strain>ATCC 13939 / DSM 20539 / JCM 16871 / CCUG 27074 / LMG 4051 / NBRC 15346 / NCIMB 9279 / VKM B-1422 / R1</strain>
    </source>
</reference>
<evidence type="ECO:0000250" key="1">
    <source>
        <dbReference type="UniProtKB" id="C1CZ84"/>
    </source>
</evidence>
<evidence type="ECO:0000256" key="2">
    <source>
        <dbReference type="SAM" id="MobiDB-lite"/>
    </source>
</evidence>
<evidence type="ECO:0000269" key="3">
    <source>
    </source>
</evidence>
<evidence type="ECO:0000269" key="4">
    <source>
    </source>
</evidence>
<evidence type="ECO:0000269" key="5">
    <source>
    </source>
</evidence>
<evidence type="ECO:0000303" key="6">
    <source>
    </source>
</evidence>
<evidence type="ECO:0000303" key="7">
    <source>
    </source>
</evidence>
<evidence type="ECO:0000305" key="8"/>
<evidence type="ECO:0000312" key="9">
    <source>
        <dbReference type="EMBL" id="AAF09762.1"/>
    </source>
</evidence>
<proteinExistence type="evidence at protein level"/>
<keyword id="KW-0238">DNA-binding</keyword>
<keyword id="KW-0378">Hydrolase</keyword>
<keyword id="KW-0479">Metal-binding</keyword>
<keyword id="KW-0482">Metalloprotease</keyword>
<keyword id="KW-0645">Protease</keyword>
<keyword id="KW-1185">Reference proteome</keyword>
<keyword id="KW-0346">Stress response</keyword>
<keyword id="KW-0862">Zinc</keyword>
<feature type="chain" id="PRO_0000432103" description="Radiation response metalloprotease IrrE">
    <location>
        <begin position="1"/>
        <end position="328"/>
    </location>
</feature>
<feature type="region of interest" description="Disordered" evidence="2">
    <location>
        <begin position="1"/>
        <end position="31"/>
    </location>
</feature>
<feature type="region of interest" description="Disordered" evidence="2">
    <location>
        <begin position="217"/>
        <end position="238"/>
    </location>
</feature>
<feature type="region of interest" description="Disordered" evidence="2">
    <location>
        <begin position="309"/>
        <end position="328"/>
    </location>
</feature>
<feature type="active site" evidence="1">
    <location>
        <position position="119"/>
    </location>
</feature>
<feature type="binding site" evidence="1">
    <location>
        <position position="118"/>
    </location>
    <ligand>
        <name>Zn(2+)</name>
        <dbReference type="ChEBI" id="CHEBI:29105"/>
        <note>catalytic</note>
    </ligand>
</feature>
<feature type="binding site" evidence="1">
    <location>
        <position position="122"/>
    </location>
    <ligand>
        <name>Zn(2+)</name>
        <dbReference type="ChEBI" id="CHEBI:29105"/>
        <note>catalytic</note>
    </ligand>
</feature>
<feature type="binding site" evidence="1">
    <location>
        <position position="149"/>
    </location>
    <ligand>
        <name>Zn(2+)</name>
        <dbReference type="ChEBI" id="CHEBI:29105"/>
        <note>catalytic</note>
    </ligand>
</feature>
<gene>
    <name evidence="6" type="primary">irrE</name>
    <name evidence="7" type="synonym">pprI</name>
    <name evidence="9" type="ordered locus">DR_0167</name>
</gene>
<protein>
    <recommendedName>
        <fullName evidence="1">Radiation response metalloprotease IrrE</fullName>
        <ecNumber evidence="1">3.4.24.-</ecNumber>
    </recommendedName>
    <alternativeName>
        <fullName evidence="8">DNA repair regulatory protein IrrE</fullName>
    </alternativeName>
    <alternativeName>
        <fullName evidence="7">Inducer of pleiotropic protein for DNA repair</fullName>
    </alternativeName>
</protein>
<organism>
    <name type="scientific">Deinococcus radiodurans (strain ATCC 13939 / DSM 20539 / JCM 16871 / CCUG 27074 / LMG 4051 / NBRC 15346 / NCIMB 9279 / VKM B-1422 / R1)</name>
    <dbReference type="NCBI Taxonomy" id="243230"/>
    <lineage>
        <taxon>Bacteria</taxon>
        <taxon>Thermotogati</taxon>
        <taxon>Deinococcota</taxon>
        <taxon>Deinococci</taxon>
        <taxon>Deinococcales</taxon>
        <taxon>Deinococcaceae</taxon>
        <taxon>Deinococcus</taxon>
    </lineage>
</organism>
<sequence length="328" mass="34757">MPSANVSPPCPSGVRGGGMGPKAKAEASKPHPQIPVKLPFVTAPDALAAAKARMRDLAAAYVAALPGRDTHSLMAGVPGVDLKFMPLGWRDGAFDPEHNVILINSAARPERQRFTLAHEIGHAILLGDDDLLSDIHDAYEGERLEQVIETLCNVAAAAILMPEPVIAEMLERFGPTGRALAELAKRAEVSASSALYALTEQTPVPVIYAVCAPGKPPREQAASDEDAGPSTEKVLTVRASSSTRGVKYTLASGTPVPADHPAALALATGMEVREESYVPFRSGRKMKAEVDAYPSRGIVAVSFEFDPARLGRKDSEQADRDEPQDAAQ</sequence>